<feature type="chain" id="PRO_1000149270" description="2-isopropylmalate synthase">
    <location>
        <begin position="1"/>
        <end position="523"/>
    </location>
</feature>
<feature type="domain" description="Pyruvate carboxyltransferase" evidence="1">
    <location>
        <begin position="5"/>
        <end position="267"/>
    </location>
</feature>
<feature type="region of interest" description="Regulatory domain" evidence="1">
    <location>
        <begin position="392"/>
        <end position="523"/>
    </location>
</feature>
<feature type="binding site" evidence="1">
    <location>
        <position position="14"/>
    </location>
    <ligand>
        <name>Mn(2+)</name>
        <dbReference type="ChEBI" id="CHEBI:29035"/>
    </ligand>
</feature>
<feature type="binding site" evidence="1">
    <location>
        <position position="202"/>
    </location>
    <ligand>
        <name>Mn(2+)</name>
        <dbReference type="ChEBI" id="CHEBI:29035"/>
    </ligand>
</feature>
<feature type="binding site" evidence="1">
    <location>
        <position position="204"/>
    </location>
    <ligand>
        <name>Mn(2+)</name>
        <dbReference type="ChEBI" id="CHEBI:29035"/>
    </ligand>
</feature>
<feature type="binding site" evidence="1">
    <location>
        <position position="238"/>
    </location>
    <ligand>
        <name>Mn(2+)</name>
        <dbReference type="ChEBI" id="CHEBI:29035"/>
    </ligand>
</feature>
<evidence type="ECO:0000255" key="1">
    <source>
        <dbReference type="HAMAP-Rule" id="MF_01025"/>
    </source>
</evidence>
<name>LEU1_SALNS</name>
<gene>
    <name evidence="1" type="primary">leuA</name>
    <name type="ordered locus">SNSL254_A0125</name>
</gene>
<accession>B4SU36</accession>
<reference key="1">
    <citation type="journal article" date="2011" name="J. Bacteriol.">
        <title>Comparative genomics of 28 Salmonella enterica isolates: evidence for CRISPR-mediated adaptive sublineage evolution.</title>
        <authorList>
            <person name="Fricke W.F."/>
            <person name="Mammel M.K."/>
            <person name="McDermott P.F."/>
            <person name="Tartera C."/>
            <person name="White D.G."/>
            <person name="Leclerc J.E."/>
            <person name="Ravel J."/>
            <person name="Cebula T.A."/>
        </authorList>
    </citation>
    <scope>NUCLEOTIDE SEQUENCE [LARGE SCALE GENOMIC DNA]</scope>
    <source>
        <strain>SL254</strain>
    </source>
</reference>
<keyword id="KW-0028">Amino-acid biosynthesis</keyword>
<keyword id="KW-0100">Branched-chain amino acid biosynthesis</keyword>
<keyword id="KW-0963">Cytoplasm</keyword>
<keyword id="KW-0432">Leucine biosynthesis</keyword>
<keyword id="KW-0464">Manganese</keyword>
<keyword id="KW-0479">Metal-binding</keyword>
<keyword id="KW-0808">Transferase</keyword>
<dbReference type="EC" id="2.3.3.13" evidence="1"/>
<dbReference type="EMBL" id="CP001113">
    <property type="protein sequence ID" value="ACF62937.1"/>
    <property type="molecule type" value="Genomic_DNA"/>
</dbReference>
<dbReference type="RefSeq" id="WP_000082814.1">
    <property type="nucleotide sequence ID" value="NC_011080.1"/>
</dbReference>
<dbReference type="SMR" id="B4SU36"/>
<dbReference type="KEGG" id="see:SNSL254_A0125"/>
<dbReference type="HOGENOM" id="CLU_022158_0_1_6"/>
<dbReference type="UniPathway" id="UPA00048">
    <property type="reaction ID" value="UER00070"/>
</dbReference>
<dbReference type="Proteomes" id="UP000008824">
    <property type="component" value="Chromosome"/>
</dbReference>
<dbReference type="GO" id="GO:0005829">
    <property type="term" value="C:cytosol"/>
    <property type="evidence" value="ECO:0007669"/>
    <property type="project" value="TreeGrafter"/>
</dbReference>
<dbReference type="GO" id="GO:0003852">
    <property type="term" value="F:2-isopropylmalate synthase activity"/>
    <property type="evidence" value="ECO:0007669"/>
    <property type="project" value="UniProtKB-UniRule"/>
</dbReference>
<dbReference type="GO" id="GO:0003985">
    <property type="term" value="F:acetyl-CoA C-acetyltransferase activity"/>
    <property type="evidence" value="ECO:0007669"/>
    <property type="project" value="UniProtKB-UniRule"/>
</dbReference>
<dbReference type="GO" id="GO:0030145">
    <property type="term" value="F:manganese ion binding"/>
    <property type="evidence" value="ECO:0007669"/>
    <property type="project" value="UniProtKB-UniRule"/>
</dbReference>
<dbReference type="GO" id="GO:0009098">
    <property type="term" value="P:L-leucine biosynthetic process"/>
    <property type="evidence" value="ECO:0007669"/>
    <property type="project" value="UniProtKB-UniRule"/>
</dbReference>
<dbReference type="CDD" id="cd07940">
    <property type="entry name" value="DRE_TIM_IPMS"/>
    <property type="match status" value="1"/>
</dbReference>
<dbReference type="FunFam" id="1.10.238.260:FF:000001">
    <property type="entry name" value="2-isopropylmalate synthase"/>
    <property type="match status" value="1"/>
</dbReference>
<dbReference type="FunFam" id="3.20.20.70:FF:000010">
    <property type="entry name" value="2-isopropylmalate synthase"/>
    <property type="match status" value="1"/>
</dbReference>
<dbReference type="FunFam" id="3.30.160.270:FF:000001">
    <property type="entry name" value="2-isopropylmalate synthase"/>
    <property type="match status" value="1"/>
</dbReference>
<dbReference type="Gene3D" id="1.10.238.260">
    <property type="match status" value="1"/>
</dbReference>
<dbReference type="Gene3D" id="3.30.160.270">
    <property type="match status" value="1"/>
</dbReference>
<dbReference type="Gene3D" id="3.20.20.70">
    <property type="entry name" value="Aldolase class I"/>
    <property type="match status" value="1"/>
</dbReference>
<dbReference type="HAMAP" id="MF_01025">
    <property type="entry name" value="LeuA_type1"/>
    <property type="match status" value="1"/>
</dbReference>
<dbReference type="InterPro" id="IPR050073">
    <property type="entry name" value="2-IPM_HCS-like"/>
</dbReference>
<dbReference type="InterPro" id="IPR013709">
    <property type="entry name" value="2-isopropylmalate_synth_dimer"/>
</dbReference>
<dbReference type="InterPro" id="IPR002034">
    <property type="entry name" value="AIPM/Hcit_synth_CS"/>
</dbReference>
<dbReference type="InterPro" id="IPR013785">
    <property type="entry name" value="Aldolase_TIM"/>
</dbReference>
<dbReference type="InterPro" id="IPR054691">
    <property type="entry name" value="LeuA/HCS_post-cat"/>
</dbReference>
<dbReference type="InterPro" id="IPR036230">
    <property type="entry name" value="LeuA_allosteric_dom_sf"/>
</dbReference>
<dbReference type="InterPro" id="IPR005671">
    <property type="entry name" value="LeuA_bact_synth"/>
</dbReference>
<dbReference type="InterPro" id="IPR000891">
    <property type="entry name" value="PYR_CT"/>
</dbReference>
<dbReference type="NCBIfam" id="TIGR00973">
    <property type="entry name" value="leuA_bact"/>
    <property type="match status" value="1"/>
</dbReference>
<dbReference type="NCBIfam" id="NF002084">
    <property type="entry name" value="PRK00915.1-1"/>
    <property type="match status" value="1"/>
</dbReference>
<dbReference type="NCBIfam" id="NF002086">
    <property type="entry name" value="PRK00915.1-3"/>
    <property type="match status" value="1"/>
</dbReference>
<dbReference type="PANTHER" id="PTHR10277:SF9">
    <property type="entry name" value="2-ISOPROPYLMALATE SYNTHASE 1, CHLOROPLASTIC-RELATED"/>
    <property type="match status" value="1"/>
</dbReference>
<dbReference type="PANTHER" id="PTHR10277">
    <property type="entry name" value="HOMOCITRATE SYNTHASE-RELATED"/>
    <property type="match status" value="1"/>
</dbReference>
<dbReference type="Pfam" id="PF22617">
    <property type="entry name" value="HCS_D2"/>
    <property type="match status" value="1"/>
</dbReference>
<dbReference type="Pfam" id="PF00682">
    <property type="entry name" value="HMGL-like"/>
    <property type="match status" value="1"/>
</dbReference>
<dbReference type="Pfam" id="PF08502">
    <property type="entry name" value="LeuA_dimer"/>
    <property type="match status" value="1"/>
</dbReference>
<dbReference type="SMART" id="SM00917">
    <property type="entry name" value="LeuA_dimer"/>
    <property type="match status" value="1"/>
</dbReference>
<dbReference type="SUPFAM" id="SSF110921">
    <property type="entry name" value="2-isopropylmalate synthase LeuA, allosteric (dimerisation) domain"/>
    <property type="match status" value="1"/>
</dbReference>
<dbReference type="SUPFAM" id="SSF51569">
    <property type="entry name" value="Aldolase"/>
    <property type="match status" value="1"/>
</dbReference>
<dbReference type="PROSITE" id="PS00815">
    <property type="entry name" value="AIPM_HOMOCIT_SYNTH_1"/>
    <property type="match status" value="1"/>
</dbReference>
<dbReference type="PROSITE" id="PS00816">
    <property type="entry name" value="AIPM_HOMOCIT_SYNTH_2"/>
    <property type="match status" value="1"/>
</dbReference>
<dbReference type="PROSITE" id="PS50991">
    <property type="entry name" value="PYR_CT"/>
    <property type="match status" value="1"/>
</dbReference>
<sequence>MSQQVIIFDTTLRDGEQALQASLSAKEKLQIALALERMGVDVMEVGFPVSSPGDFESVQTIARTIKNSRVCALARCVEKDIDVAAQALKVADAFRIHTFIATSPMHIATKLRSTLDEVIERAVYMVKRARNYTDDVEFSCEDAGRTPVDDLARVVEAAINAGARTINIPDTVGYTMPFEFAGIISGLYERVPNIDKAIISVHTHDDLGIAVGNSLAAVHAGARQVEGAMNGIGERAGNCALEEVIMAIKVRKDIMNVHTNINHHEIWRTSQTVSQICNMPIPANKAIVGSGAFAHSSGIHQDGVLKNRENYEIMTPESIGLNQIQLNLTSRSGRAAVKHRMEEMGYKDTDYNIDHLYDAFLKLADKKGQVFDYDLEALAFINKQQEEPEHFRLDYFSVQSGSSDIATASVKLACGEEIKAEAANGNGPVDAIYQAINRITGYDVELVKYDLNAKGQGKDALGQVDIVVNHHGRRFHGVGLATDIVESSAKAMVHVLNNIWRAAEVEKELQRKAQNKENNKETV</sequence>
<proteinExistence type="inferred from homology"/>
<comment type="function">
    <text evidence="1">Catalyzes the condensation of the acetyl group of acetyl-CoA with 3-methyl-2-oxobutanoate (2-ketoisovalerate) to form 3-carboxy-3-hydroxy-4-methylpentanoate (2-isopropylmalate).</text>
</comment>
<comment type="catalytic activity">
    <reaction evidence="1">
        <text>3-methyl-2-oxobutanoate + acetyl-CoA + H2O = (2S)-2-isopropylmalate + CoA + H(+)</text>
        <dbReference type="Rhea" id="RHEA:21524"/>
        <dbReference type="ChEBI" id="CHEBI:1178"/>
        <dbReference type="ChEBI" id="CHEBI:11851"/>
        <dbReference type="ChEBI" id="CHEBI:15377"/>
        <dbReference type="ChEBI" id="CHEBI:15378"/>
        <dbReference type="ChEBI" id="CHEBI:57287"/>
        <dbReference type="ChEBI" id="CHEBI:57288"/>
        <dbReference type="EC" id="2.3.3.13"/>
    </reaction>
</comment>
<comment type="cofactor">
    <cofactor evidence="1">
        <name>Mn(2+)</name>
        <dbReference type="ChEBI" id="CHEBI:29035"/>
    </cofactor>
</comment>
<comment type="pathway">
    <text evidence="1">Amino-acid biosynthesis; L-leucine biosynthesis; L-leucine from 3-methyl-2-oxobutanoate: step 1/4.</text>
</comment>
<comment type="subunit">
    <text evidence="1">Homodimer.</text>
</comment>
<comment type="subcellular location">
    <subcellularLocation>
        <location evidence="1">Cytoplasm</location>
    </subcellularLocation>
</comment>
<comment type="similarity">
    <text evidence="1">Belongs to the alpha-IPM synthase/homocitrate synthase family. LeuA type 1 subfamily.</text>
</comment>
<protein>
    <recommendedName>
        <fullName evidence="1">2-isopropylmalate synthase</fullName>
        <ecNumber evidence="1">2.3.3.13</ecNumber>
    </recommendedName>
    <alternativeName>
        <fullName evidence="1">Alpha-IPM synthase</fullName>
    </alternativeName>
    <alternativeName>
        <fullName evidence="1">Alpha-isopropylmalate synthase</fullName>
    </alternativeName>
</protein>
<organism>
    <name type="scientific">Salmonella newport (strain SL254)</name>
    <dbReference type="NCBI Taxonomy" id="423368"/>
    <lineage>
        <taxon>Bacteria</taxon>
        <taxon>Pseudomonadati</taxon>
        <taxon>Pseudomonadota</taxon>
        <taxon>Gammaproteobacteria</taxon>
        <taxon>Enterobacterales</taxon>
        <taxon>Enterobacteriaceae</taxon>
        <taxon>Salmonella</taxon>
    </lineage>
</organism>